<protein>
    <recommendedName>
        <fullName evidence="1">Serine hydroxymethyltransferase</fullName>
        <shortName evidence="1">SHMT</shortName>
        <shortName evidence="1">Serine methylase</shortName>
        <ecNumber evidence="1">2.1.2.1</ecNumber>
    </recommendedName>
</protein>
<dbReference type="EC" id="2.1.2.1" evidence="1"/>
<dbReference type="EMBL" id="CP000921">
    <property type="protein sequence ID" value="ACO24157.1"/>
    <property type="molecule type" value="Genomic_DNA"/>
</dbReference>
<dbReference type="RefSeq" id="WP_000575521.1">
    <property type="nucleotide sequence ID" value="NC_012469.1"/>
</dbReference>
<dbReference type="SMR" id="C1CRE4"/>
<dbReference type="KEGG" id="snt:SPT_1076"/>
<dbReference type="HOGENOM" id="CLU_022477_2_1_9"/>
<dbReference type="UniPathway" id="UPA00193"/>
<dbReference type="UniPathway" id="UPA00288">
    <property type="reaction ID" value="UER01023"/>
</dbReference>
<dbReference type="GO" id="GO:0005829">
    <property type="term" value="C:cytosol"/>
    <property type="evidence" value="ECO:0007669"/>
    <property type="project" value="TreeGrafter"/>
</dbReference>
<dbReference type="GO" id="GO:0004372">
    <property type="term" value="F:glycine hydroxymethyltransferase activity"/>
    <property type="evidence" value="ECO:0007669"/>
    <property type="project" value="UniProtKB-UniRule"/>
</dbReference>
<dbReference type="GO" id="GO:0030170">
    <property type="term" value="F:pyridoxal phosphate binding"/>
    <property type="evidence" value="ECO:0007669"/>
    <property type="project" value="UniProtKB-UniRule"/>
</dbReference>
<dbReference type="GO" id="GO:0019264">
    <property type="term" value="P:glycine biosynthetic process from serine"/>
    <property type="evidence" value="ECO:0007669"/>
    <property type="project" value="UniProtKB-UniRule"/>
</dbReference>
<dbReference type="GO" id="GO:0035999">
    <property type="term" value="P:tetrahydrofolate interconversion"/>
    <property type="evidence" value="ECO:0007669"/>
    <property type="project" value="UniProtKB-UniRule"/>
</dbReference>
<dbReference type="CDD" id="cd00378">
    <property type="entry name" value="SHMT"/>
    <property type="match status" value="1"/>
</dbReference>
<dbReference type="FunFam" id="3.40.640.10:FF:000001">
    <property type="entry name" value="Serine hydroxymethyltransferase"/>
    <property type="match status" value="1"/>
</dbReference>
<dbReference type="FunFam" id="3.90.1150.10:FF:000072">
    <property type="entry name" value="Serine hydroxymethyltransferase"/>
    <property type="match status" value="1"/>
</dbReference>
<dbReference type="Gene3D" id="3.90.1150.10">
    <property type="entry name" value="Aspartate Aminotransferase, domain 1"/>
    <property type="match status" value="1"/>
</dbReference>
<dbReference type="Gene3D" id="3.40.640.10">
    <property type="entry name" value="Type I PLP-dependent aspartate aminotransferase-like (Major domain)"/>
    <property type="match status" value="1"/>
</dbReference>
<dbReference type="HAMAP" id="MF_00051">
    <property type="entry name" value="SHMT"/>
    <property type="match status" value="1"/>
</dbReference>
<dbReference type="InterPro" id="IPR015424">
    <property type="entry name" value="PyrdxlP-dep_Trfase"/>
</dbReference>
<dbReference type="InterPro" id="IPR015421">
    <property type="entry name" value="PyrdxlP-dep_Trfase_major"/>
</dbReference>
<dbReference type="InterPro" id="IPR015422">
    <property type="entry name" value="PyrdxlP-dep_Trfase_small"/>
</dbReference>
<dbReference type="InterPro" id="IPR001085">
    <property type="entry name" value="Ser_HO-MeTrfase"/>
</dbReference>
<dbReference type="InterPro" id="IPR049943">
    <property type="entry name" value="Ser_HO-MeTrfase-like"/>
</dbReference>
<dbReference type="InterPro" id="IPR019798">
    <property type="entry name" value="Ser_HO-MeTrfase_PLP_BS"/>
</dbReference>
<dbReference type="InterPro" id="IPR039429">
    <property type="entry name" value="SHMT-like_dom"/>
</dbReference>
<dbReference type="NCBIfam" id="NF000586">
    <property type="entry name" value="PRK00011.1"/>
    <property type="match status" value="1"/>
</dbReference>
<dbReference type="PANTHER" id="PTHR11680">
    <property type="entry name" value="SERINE HYDROXYMETHYLTRANSFERASE"/>
    <property type="match status" value="1"/>
</dbReference>
<dbReference type="PANTHER" id="PTHR11680:SF35">
    <property type="entry name" value="SERINE HYDROXYMETHYLTRANSFERASE 1"/>
    <property type="match status" value="1"/>
</dbReference>
<dbReference type="Pfam" id="PF00464">
    <property type="entry name" value="SHMT"/>
    <property type="match status" value="1"/>
</dbReference>
<dbReference type="PIRSF" id="PIRSF000412">
    <property type="entry name" value="SHMT"/>
    <property type="match status" value="1"/>
</dbReference>
<dbReference type="SUPFAM" id="SSF53383">
    <property type="entry name" value="PLP-dependent transferases"/>
    <property type="match status" value="1"/>
</dbReference>
<dbReference type="PROSITE" id="PS00096">
    <property type="entry name" value="SHMT"/>
    <property type="match status" value="1"/>
</dbReference>
<gene>
    <name evidence="1" type="primary">glyA</name>
    <name type="ordered locus">SPT_1076</name>
</gene>
<feature type="chain" id="PRO_1000117655" description="Serine hydroxymethyltransferase">
    <location>
        <begin position="1"/>
        <end position="418"/>
    </location>
</feature>
<feature type="binding site" evidence="1">
    <location>
        <position position="121"/>
    </location>
    <ligand>
        <name>(6S)-5,6,7,8-tetrahydrofolate</name>
        <dbReference type="ChEBI" id="CHEBI:57453"/>
    </ligand>
</feature>
<feature type="binding site" evidence="1">
    <location>
        <begin position="125"/>
        <end position="127"/>
    </location>
    <ligand>
        <name>(6S)-5,6,7,8-tetrahydrofolate</name>
        <dbReference type="ChEBI" id="CHEBI:57453"/>
    </ligand>
</feature>
<feature type="binding site" evidence="1">
    <location>
        <position position="246"/>
    </location>
    <ligand>
        <name>(6S)-5,6,7,8-tetrahydrofolate</name>
        <dbReference type="ChEBI" id="CHEBI:57453"/>
    </ligand>
</feature>
<feature type="binding site" evidence="1">
    <location>
        <begin position="355"/>
        <end position="357"/>
    </location>
    <ligand>
        <name>(6S)-5,6,7,8-tetrahydrofolate</name>
        <dbReference type="ChEBI" id="CHEBI:57453"/>
    </ligand>
</feature>
<feature type="site" description="Plays an important role in substrate specificity" evidence="1">
    <location>
        <position position="229"/>
    </location>
</feature>
<feature type="modified residue" description="N6-(pyridoxal phosphate)lysine" evidence="1">
    <location>
        <position position="230"/>
    </location>
</feature>
<evidence type="ECO:0000255" key="1">
    <source>
        <dbReference type="HAMAP-Rule" id="MF_00051"/>
    </source>
</evidence>
<name>GLYA_STRZT</name>
<sequence>MIFDKDDFKAYDADLWNAIAKEEERQQNNIELIASENVVSKAVMAAQGSILTNKYAEGYPGRRYYGGTDVVDVVETLAIERAKEIFGAKFANVQPHSGSQANCAAYMSLIEPGDTVMGMDLASGGHLTHGAPVSFSGQTYNFVSYSVDPETELLDFDAILKQAQEVKPKLIVAGASAYSQIIDFSKFREIADAVGAKLMVDMAHIAGLVAAGLHPSPVPYAHITTTTTHKTLRGPRGGLILTNDEELAKKINSAIFPGIQGGPLEHVVAAKAVSFKEVLDPAFKEYAANVIKNSKAMADVFLQDPDFRIISGGTENHLFLVDVTKVVENGKVAQNLLDEVNITLNKNSIPYETLSPFKTSGIRIGAAAITARGFGEEESRKVAELIIKTLKNSENEAVLEEVRSAVKELTDAFPLYED</sequence>
<keyword id="KW-0028">Amino-acid biosynthesis</keyword>
<keyword id="KW-0963">Cytoplasm</keyword>
<keyword id="KW-0554">One-carbon metabolism</keyword>
<keyword id="KW-0663">Pyridoxal phosphate</keyword>
<keyword id="KW-0808">Transferase</keyword>
<proteinExistence type="inferred from homology"/>
<organism>
    <name type="scientific">Streptococcus pneumoniae (strain Taiwan19F-14)</name>
    <dbReference type="NCBI Taxonomy" id="487213"/>
    <lineage>
        <taxon>Bacteria</taxon>
        <taxon>Bacillati</taxon>
        <taxon>Bacillota</taxon>
        <taxon>Bacilli</taxon>
        <taxon>Lactobacillales</taxon>
        <taxon>Streptococcaceae</taxon>
        <taxon>Streptococcus</taxon>
    </lineage>
</organism>
<accession>C1CRE4</accession>
<reference key="1">
    <citation type="journal article" date="2010" name="Genome Biol.">
        <title>Structure and dynamics of the pan-genome of Streptococcus pneumoniae and closely related species.</title>
        <authorList>
            <person name="Donati C."/>
            <person name="Hiller N.L."/>
            <person name="Tettelin H."/>
            <person name="Muzzi A."/>
            <person name="Croucher N.J."/>
            <person name="Angiuoli S.V."/>
            <person name="Oggioni M."/>
            <person name="Dunning Hotopp J.C."/>
            <person name="Hu F.Z."/>
            <person name="Riley D.R."/>
            <person name="Covacci A."/>
            <person name="Mitchell T.J."/>
            <person name="Bentley S.D."/>
            <person name="Kilian M."/>
            <person name="Ehrlich G.D."/>
            <person name="Rappuoli R."/>
            <person name="Moxon E.R."/>
            <person name="Masignani V."/>
        </authorList>
    </citation>
    <scope>NUCLEOTIDE SEQUENCE [LARGE SCALE GENOMIC DNA]</scope>
    <source>
        <strain>Taiwan19F-14</strain>
    </source>
</reference>
<comment type="function">
    <text evidence="1">Catalyzes the reversible interconversion of serine and glycine with tetrahydrofolate (THF) serving as the one-carbon carrier. This reaction serves as the major source of one-carbon groups required for the biosynthesis of purines, thymidylate, methionine, and other important biomolecules. Also exhibits THF-independent aldolase activity toward beta-hydroxyamino acids, producing glycine and aldehydes, via a retro-aldol mechanism.</text>
</comment>
<comment type="catalytic activity">
    <reaction evidence="1">
        <text>(6R)-5,10-methylene-5,6,7,8-tetrahydrofolate + glycine + H2O = (6S)-5,6,7,8-tetrahydrofolate + L-serine</text>
        <dbReference type="Rhea" id="RHEA:15481"/>
        <dbReference type="ChEBI" id="CHEBI:15377"/>
        <dbReference type="ChEBI" id="CHEBI:15636"/>
        <dbReference type="ChEBI" id="CHEBI:33384"/>
        <dbReference type="ChEBI" id="CHEBI:57305"/>
        <dbReference type="ChEBI" id="CHEBI:57453"/>
        <dbReference type="EC" id="2.1.2.1"/>
    </reaction>
</comment>
<comment type="cofactor">
    <cofactor evidence="1">
        <name>pyridoxal 5'-phosphate</name>
        <dbReference type="ChEBI" id="CHEBI:597326"/>
    </cofactor>
</comment>
<comment type="pathway">
    <text evidence="1">One-carbon metabolism; tetrahydrofolate interconversion.</text>
</comment>
<comment type="pathway">
    <text evidence="1">Amino-acid biosynthesis; glycine biosynthesis; glycine from L-serine: step 1/1.</text>
</comment>
<comment type="subunit">
    <text evidence="1">Homodimer.</text>
</comment>
<comment type="subcellular location">
    <subcellularLocation>
        <location evidence="1">Cytoplasm</location>
    </subcellularLocation>
</comment>
<comment type="similarity">
    <text evidence="1">Belongs to the SHMT family.</text>
</comment>